<accession>A9KGX9</accession>
<sequence>MAKQAIKRAKILAVKNNNKIGVLLINLGTPDEPSVPAVRRYLRQFLSDPKVIDVPSLMRWIIVHLCILPFRPKRSAKLYQKIWMPEGSPLLVYSEMLRERVGETLGDDFCVALGMRYGKPSIETALKKLQEAQCRQLIVLPLFPQYSTSTTASALEEVRAKNSFKEMTVIDRFFEEPHYIDSMTTLIHENLNEFQPDYFLFSYHGLPERHLVKSGCQLAICNRKNNCSPISSSNENCYRAQCFETSRLIAKKLNLTDQQYGVAFQSRLGRAKWIEPYTDKYLIELSKKGIKKLMVVCPSFPVDCLETLEEIGIRAQSQWQRLGGETLKLIPSLNAHPQWVNAIAKMAKKSLQLF</sequence>
<protein>
    <recommendedName>
        <fullName evidence="1">Ferrochelatase</fullName>
        <ecNumber evidence="1">4.98.1.1</ecNumber>
    </recommendedName>
    <alternativeName>
        <fullName evidence="1">Heme synthase</fullName>
    </alternativeName>
    <alternativeName>
        <fullName evidence="1">Protoheme ferro-lyase</fullName>
    </alternativeName>
</protein>
<dbReference type="EC" id="4.98.1.1" evidence="1"/>
<dbReference type="EMBL" id="CP000733">
    <property type="protein sequence ID" value="ABS77267.2"/>
    <property type="molecule type" value="Genomic_DNA"/>
</dbReference>
<dbReference type="SMR" id="A9KGX9"/>
<dbReference type="KEGG" id="cbd:CBUD_2060"/>
<dbReference type="HOGENOM" id="CLU_018884_0_1_6"/>
<dbReference type="UniPathway" id="UPA00252">
    <property type="reaction ID" value="UER00325"/>
</dbReference>
<dbReference type="Proteomes" id="UP000008555">
    <property type="component" value="Chromosome"/>
</dbReference>
<dbReference type="GO" id="GO:0005737">
    <property type="term" value="C:cytoplasm"/>
    <property type="evidence" value="ECO:0007669"/>
    <property type="project" value="UniProtKB-SubCell"/>
</dbReference>
<dbReference type="GO" id="GO:0004325">
    <property type="term" value="F:ferrochelatase activity"/>
    <property type="evidence" value="ECO:0007669"/>
    <property type="project" value="UniProtKB-UniRule"/>
</dbReference>
<dbReference type="GO" id="GO:0046872">
    <property type="term" value="F:metal ion binding"/>
    <property type="evidence" value="ECO:0007669"/>
    <property type="project" value="UniProtKB-KW"/>
</dbReference>
<dbReference type="GO" id="GO:0006783">
    <property type="term" value="P:heme biosynthetic process"/>
    <property type="evidence" value="ECO:0007669"/>
    <property type="project" value="UniProtKB-UniRule"/>
</dbReference>
<dbReference type="CDD" id="cd00419">
    <property type="entry name" value="Ferrochelatase_C"/>
    <property type="match status" value="1"/>
</dbReference>
<dbReference type="CDD" id="cd03411">
    <property type="entry name" value="Ferrochelatase_N"/>
    <property type="match status" value="1"/>
</dbReference>
<dbReference type="Gene3D" id="3.40.50.1400">
    <property type="match status" value="2"/>
</dbReference>
<dbReference type="HAMAP" id="MF_00323">
    <property type="entry name" value="Ferrochelatase"/>
    <property type="match status" value="1"/>
</dbReference>
<dbReference type="InterPro" id="IPR001015">
    <property type="entry name" value="Ferrochelatase"/>
</dbReference>
<dbReference type="InterPro" id="IPR019772">
    <property type="entry name" value="Ferrochelatase_AS"/>
</dbReference>
<dbReference type="InterPro" id="IPR033644">
    <property type="entry name" value="Ferrochelatase_C"/>
</dbReference>
<dbReference type="InterPro" id="IPR033659">
    <property type="entry name" value="Ferrochelatase_N"/>
</dbReference>
<dbReference type="NCBIfam" id="TIGR00109">
    <property type="entry name" value="hemH"/>
    <property type="match status" value="1"/>
</dbReference>
<dbReference type="PANTHER" id="PTHR11108">
    <property type="entry name" value="FERROCHELATASE"/>
    <property type="match status" value="1"/>
</dbReference>
<dbReference type="PANTHER" id="PTHR11108:SF1">
    <property type="entry name" value="FERROCHELATASE, MITOCHONDRIAL"/>
    <property type="match status" value="1"/>
</dbReference>
<dbReference type="Pfam" id="PF00762">
    <property type="entry name" value="Ferrochelatase"/>
    <property type="match status" value="1"/>
</dbReference>
<dbReference type="SUPFAM" id="SSF53800">
    <property type="entry name" value="Chelatase"/>
    <property type="match status" value="1"/>
</dbReference>
<dbReference type="PROSITE" id="PS00534">
    <property type="entry name" value="FERROCHELATASE"/>
    <property type="match status" value="1"/>
</dbReference>
<evidence type="ECO:0000255" key="1">
    <source>
        <dbReference type="HAMAP-Rule" id="MF_00323"/>
    </source>
</evidence>
<name>HEMH_COXBN</name>
<comment type="function">
    <text evidence="1">Catalyzes the ferrous insertion into protoporphyrin IX.</text>
</comment>
<comment type="catalytic activity">
    <reaction evidence="1">
        <text>heme b + 2 H(+) = protoporphyrin IX + Fe(2+)</text>
        <dbReference type="Rhea" id="RHEA:22584"/>
        <dbReference type="ChEBI" id="CHEBI:15378"/>
        <dbReference type="ChEBI" id="CHEBI:29033"/>
        <dbReference type="ChEBI" id="CHEBI:57306"/>
        <dbReference type="ChEBI" id="CHEBI:60344"/>
        <dbReference type="EC" id="4.98.1.1"/>
    </reaction>
</comment>
<comment type="pathway">
    <text evidence="1">Porphyrin-containing compound metabolism; protoheme biosynthesis; protoheme from protoporphyrin-IX: step 1/1.</text>
</comment>
<comment type="subcellular location">
    <subcellularLocation>
        <location evidence="1">Cytoplasm</location>
    </subcellularLocation>
</comment>
<comment type="similarity">
    <text evidence="1">Belongs to the ferrochelatase family.</text>
</comment>
<feature type="chain" id="PRO_1000116040" description="Ferrochelatase">
    <location>
        <begin position="1"/>
        <end position="354"/>
    </location>
</feature>
<feature type="binding site" evidence="1">
    <location>
        <position position="204"/>
    </location>
    <ligand>
        <name>Fe cation</name>
        <dbReference type="ChEBI" id="CHEBI:24875"/>
    </ligand>
</feature>
<feature type="binding site" evidence="1">
    <location>
        <position position="306"/>
    </location>
    <ligand>
        <name>Fe cation</name>
        <dbReference type="ChEBI" id="CHEBI:24875"/>
    </ligand>
</feature>
<reference key="1">
    <citation type="journal article" date="2009" name="Infect. Immun.">
        <title>Comparative genomics reveal extensive transposon-mediated genomic plasticity and diversity among potential effector proteins within the genus Coxiella.</title>
        <authorList>
            <person name="Beare P.A."/>
            <person name="Unsworth N."/>
            <person name="Andoh M."/>
            <person name="Voth D.E."/>
            <person name="Omsland A."/>
            <person name="Gilk S.D."/>
            <person name="Williams K.P."/>
            <person name="Sobral B.W."/>
            <person name="Kupko J.J. III"/>
            <person name="Porcella S.F."/>
            <person name="Samuel J.E."/>
            <person name="Heinzen R.A."/>
        </authorList>
    </citation>
    <scope>NUCLEOTIDE SEQUENCE [LARGE SCALE GENOMIC DNA]</scope>
    <source>
        <strain>Dugway 5J108-111</strain>
    </source>
</reference>
<keyword id="KW-0963">Cytoplasm</keyword>
<keyword id="KW-0350">Heme biosynthesis</keyword>
<keyword id="KW-0408">Iron</keyword>
<keyword id="KW-0456">Lyase</keyword>
<keyword id="KW-0479">Metal-binding</keyword>
<keyword id="KW-0627">Porphyrin biosynthesis</keyword>
<organism>
    <name type="scientific">Coxiella burnetii (strain Dugway 5J108-111)</name>
    <dbReference type="NCBI Taxonomy" id="434922"/>
    <lineage>
        <taxon>Bacteria</taxon>
        <taxon>Pseudomonadati</taxon>
        <taxon>Pseudomonadota</taxon>
        <taxon>Gammaproteobacteria</taxon>
        <taxon>Legionellales</taxon>
        <taxon>Coxiellaceae</taxon>
        <taxon>Coxiella</taxon>
    </lineage>
</organism>
<proteinExistence type="inferred from homology"/>
<gene>
    <name evidence="1" type="primary">hemH</name>
    <name type="ordered locus">CBUD_2060</name>
</gene>